<feature type="chain" id="PRO_1000136531" description="Esterase FrsA">
    <location>
        <begin position="1"/>
        <end position="415"/>
    </location>
</feature>
<gene>
    <name evidence="1" type="primary">frsA</name>
    <name type="ordered locus">YPK_3290</name>
</gene>
<organism>
    <name type="scientific">Yersinia pseudotuberculosis serotype O:3 (strain YPIII)</name>
    <dbReference type="NCBI Taxonomy" id="502800"/>
    <lineage>
        <taxon>Bacteria</taxon>
        <taxon>Pseudomonadati</taxon>
        <taxon>Pseudomonadota</taxon>
        <taxon>Gammaproteobacteria</taxon>
        <taxon>Enterobacterales</taxon>
        <taxon>Yersiniaceae</taxon>
        <taxon>Yersinia</taxon>
    </lineage>
</organism>
<sequence>MAQANLSEILFKPKFKHPETSTLVRRTHCNHVVNIHSALDGDTANHWYRMINRLMWTWRGIDPLEIEEVLSRIACSKAEHSNNELLDTVVGYRNGNWIYEWANQGMMWQQKAMEETDPGSAGQFWLNAANLYSIASYPHLKGDELSEQAEVLSNRAYEEAAKYLPYTLKELTFPISDGGSLSGFLHMPTVGSAPFPTVLMCGGLDTLQSDYHRLFRDYLEPKGIAMLTIDLPSVGASSRWKLTQDTSYLHQQVLQALADVPWVDHQRVSVFGFRFGANVAVRLGYLEPQRVRAVACLGPIVHHLLCNSDSLRKVPDMYMDVMASRLGMADSTDETLNTEMNRYSLKTQGLLGRRCQTPMLAGFWENDPFSPKEEAKLICSSSADGKLLAIPSKPLYENFHRALLQTSEWLEDKMR</sequence>
<proteinExistence type="inferred from homology"/>
<comment type="function">
    <text evidence="1">Catalyzes the hydrolysis of esters.</text>
</comment>
<comment type="catalytic activity">
    <reaction evidence="1">
        <text>a carboxylic ester + H2O = an alcohol + a carboxylate + H(+)</text>
        <dbReference type="Rhea" id="RHEA:21164"/>
        <dbReference type="ChEBI" id="CHEBI:15377"/>
        <dbReference type="ChEBI" id="CHEBI:15378"/>
        <dbReference type="ChEBI" id="CHEBI:29067"/>
        <dbReference type="ChEBI" id="CHEBI:30879"/>
        <dbReference type="ChEBI" id="CHEBI:33308"/>
        <dbReference type="EC" id="3.1.1.1"/>
    </reaction>
</comment>
<comment type="similarity">
    <text evidence="1">Belongs to the FrsA family.</text>
</comment>
<evidence type="ECO:0000255" key="1">
    <source>
        <dbReference type="HAMAP-Rule" id="MF_01063"/>
    </source>
</evidence>
<dbReference type="EC" id="3.1.1.1" evidence="1"/>
<dbReference type="EMBL" id="CP000950">
    <property type="protein sequence ID" value="ACA69559.1"/>
    <property type="molecule type" value="Genomic_DNA"/>
</dbReference>
<dbReference type="RefSeq" id="WP_002208703.1">
    <property type="nucleotide sequence ID" value="NZ_CP009792.1"/>
</dbReference>
<dbReference type="SMR" id="B1JIH5"/>
<dbReference type="ESTHER" id="yerpe-y3224">
    <property type="family name" value="Duf_1100-R"/>
</dbReference>
<dbReference type="GeneID" id="57975494"/>
<dbReference type="KEGG" id="ypy:YPK_3290"/>
<dbReference type="PATRIC" id="fig|502800.11.peg.4023"/>
<dbReference type="GO" id="GO:0106435">
    <property type="term" value="F:carboxylesterase activity"/>
    <property type="evidence" value="ECO:0007669"/>
    <property type="project" value="UniProtKB-EC"/>
</dbReference>
<dbReference type="FunFam" id="3.40.50.1820:FF:000022">
    <property type="entry name" value="Esterase FrsA"/>
    <property type="match status" value="1"/>
</dbReference>
<dbReference type="Gene3D" id="3.40.50.1820">
    <property type="entry name" value="alpha/beta hydrolase"/>
    <property type="match status" value="1"/>
</dbReference>
<dbReference type="HAMAP" id="MF_01063">
    <property type="entry name" value="FrsA"/>
    <property type="match status" value="1"/>
</dbReference>
<dbReference type="InterPro" id="IPR029058">
    <property type="entry name" value="AB_hydrolase_fold"/>
</dbReference>
<dbReference type="InterPro" id="IPR043423">
    <property type="entry name" value="FrsA"/>
</dbReference>
<dbReference type="InterPro" id="IPR010520">
    <property type="entry name" value="FrsA-like"/>
</dbReference>
<dbReference type="InterPro" id="IPR050261">
    <property type="entry name" value="FrsA_esterase"/>
</dbReference>
<dbReference type="NCBIfam" id="NF003460">
    <property type="entry name" value="PRK05077.1"/>
    <property type="match status" value="1"/>
</dbReference>
<dbReference type="PANTHER" id="PTHR22946">
    <property type="entry name" value="DIENELACTONE HYDROLASE DOMAIN-CONTAINING PROTEIN-RELATED"/>
    <property type="match status" value="1"/>
</dbReference>
<dbReference type="PANTHER" id="PTHR22946:SF4">
    <property type="entry name" value="ESTERASE FRSA"/>
    <property type="match status" value="1"/>
</dbReference>
<dbReference type="Pfam" id="PF06500">
    <property type="entry name" value="FrsA-like"/>
    <property type="match status" value="1"/>
</dbReference>
<dbReference type="SUPFAM" id="SSF53474">
    <property type="entry name" value="alpha/beta-Hydrolases"/>
    <property type="match status" value="1"/>
</dbReference>
<name>FRSA_YERPY</name>
<protein>
    <recommendedName>
        <fullName evidence="1">Esterase FrsA</fullName>
        <ecNumber evidence="1">3.1.1.1</ecNumber>
    </recommendedName>
</protein>
<reference key="1">
    <citation type="submission" date="2008-02" db="EMBL/GenBank/DDBJ databases">
        <title>Complete sequence of Yersinia pseudotuberculosis YPIII.</title>
        <authorList>
            <consortium name="US DOE Joint Genome Institute"/>
            <person name="Copeland A."/>
            <person name="Lucas S."/>
            <person name="Lapidus A."/>
            <person name="Glavina del Rio T."/>
            <person name="Dalin E."/>
            <person name="Tice H."/>
            <person name="Bruce D."/>
            <person name="Goodwin L."/>
            <person name="Pitluck S."/>
            <person name="Munk A.C."/>
            <person name="Brettin T."/>
            <person name="Detter J.C."/>
            <person name="Han C."/>
            <person name="Tapia R."/>
            <person name="Schmutz J."/>
            <person name="Larimer F."/>
            <person name="Land M."/>
            <person name="Hauser L."/>
            <person name="Challacombe J.F."/>
            <person name="Green L."/>
            <person name="Lindler L.E."/>
            <person name="Nikolich M.P."/>
            <person name="Richardson P."/>
        </authorList>
    </citation>
    <scope>NUCLEOTIDE SEQUENCE [LARGE SCALE GENOMIC DNA]</scope>
    <source>
        <strain>YPIII</strain>
    </source>
</reference>
<keyword id="KW-0378">Hydrolase</keyword>
<keyword id="KW-0719">Serine esterase</keyword>
<accession>B1JIH5</accession>